<evidence type="ECO:0000255" key="1">
    <source>
        <dbReference type="HAMAP-Rule" id="MF_01401"/>
    </source>
</evidence>
<keyword id="KW-0560">Oxidoreductase</keyword>
<sequence length="171" mass="19443">MSDHKKAILAGGCFWGMQDLIRKQPGVVSTRVGYTGGQNDHPTYRNHPGHAESIEITYDPAQTDYRALLEFFFQIHDPTTKNRQGNDVGTSYRSAIFYVDDEQKRVALDTIADVDASGLWPGKVVTEVTPAGEFWEAEPEHQDYLERMPWGYTCHFPRPDWKLPKRADAKA</sequence>
<reference key="1">
    <citation type="submission" date="2006-06" db="EMBL/GenBank/DDBJ databases">
        <title>Complete sequence of chromosome of Mycobacterium sp. MCS.</title>
        <authorList>
            <consortium name="US DOE Joint Genome Institute"/>
            <person name="Copeland A."/>
            <person name="Lucas S."/>
            <person name="Lapidus A."/>
            <person name="Barry K."/>
            <person name="Detter J.C."/>
            <person name="Glavina del Rio T."/>
            <person name="Hammon N."/>
            <person name="Israni S."/>
            <person name="Dalin E."/>
            <person name="Tice H."/>
            <person name="Pitluck S."/>
            <person name="Martinez M."/>
            <person name="Schmutz J."/>
            <person name="Larimer F."/>
            <person name="Land M."/>
            <person name="Hauser L."/>
            <person name="Kyrpides N."/>
            <person name="Kim E."/>
            <person name="Miller C.D."/>
            <person name="Hughes J.E."/>
            <person name="Anderson A.J."/>
            <person name="Sims R.C."/>
            <person name="Richardson P."/>
        </authorList>
    </citation>
    <scope>NUCLEOTIDE SEQUENCE [LARGE SCALE GENOMIC DNA]</scope>
    <source>
        <strain>MCS</strain>
    </source>
</reference>
<proteinExistence type="inferred from homology"/>
<name>MSRA_MYCSS</name>
<dbReference type="EC" id="1.8.4.11" evidence="1"/>
<dbReference type="EMBL" id="CP000384">
    <property type="protein sequence ID" value="ABG11196.1"/>
    <property type="molecule type" value="Genomic_DNA"/>
</dbReference>
<dbReference type="SMR" id="Q1B1N8"/>
<dbReference type="KEGG" id="mmc:Mmcs_5092"/>
<dbReference type="HOGENOM" id="CLU_031040_10_2_11"/>
<dbReference type="BioCyc" id="MSP164756:G1G6O-5205-MONOMER"/>
<dbReference type="GO" id="GO:0033744">
    <property type="term" value="F:L-methionine:thioredoxin-disulfide S-oxidoreductase activity"/>
    <property type="evidence" value="ECO:0007669"/>
    <property type="project" value="RHEA"/>
</dbReference>
<dbReference type="GO" id="GO:0008113">
    <property type="term" value="F:peptide-methionine (S)-S-oxide reductase activity"/>
    <property type="evidence" value="ECO:0007669"/>
    <property type="project" value="UniProtKB-UniRule"/>
</dbReference>
<dbReference type="GO" id="GO:0036211">
    <property type="term" value="P:protein modification process"/>
    <property type="evidence" value="ECO:0007669"/>
    <property type="project" value="UniProtKB-UniRule"/>
</dbReference>
<dbReference type="FunFam" id="3.30.1060.10:FF:000005">
    <property type="entry name" value="Peptide methionine sulfoxide reductase MsrA"/>
    <property type="match status" value="1"/>
</dbReference>
<dbReference type="Gene3D" id="3.30.1060.10">
    <property type="entry name" value="Peptide methionine sulphoxide reductase MsrA"/>
    <property type="match status" value="1"/>
</dbReference>
<dbReference type="HAMAP" id="MF_01401">
    <property type="entry name" value="MsrA"/>
    <property type="match status" value="1"/>
</dbReference>
<dbReference type="InterPro" id="IPR002569">
    <property type="entry name" value="Met_Sox_Rdtase_MsrA_dom"/>
</dbReference>
<dbReference type="InterPro" id="IPR036509">
    <property type="entry name" value="Met_Sox_Rdtase_MsrA_sf"/>
</dbReference>
<dbReference type="NCBIfam" id="TIGR00401">
    <property type="entry name" value="msrA"/>
    <property type="match status" value="1"/>
</dbReference>
<dbReference type="PANTHER" id="PTHR43774">
    <property type="entry name" value="PEPTIDE METHIONINE SULFOXIDE REDUCTASE"/>
    <property type="match status" value="1"/>
</dbReference>
<dbReference type="PANTHER" id="PTHR43774:SF1">
    <property type="entry name" value="PEPTIDE METHIONINE SULFOXIDE REDUCTASE MSRA 2"/>
    <property type="match status" value="1"/>
</dbReference>
<dbReference type="Pfam" id="PF01625">
    <property type="entry name" value="PMSR"/>
    <property type="match status" value="1"/>
</dbReference>
<dbReference type="SUPFAM" id="SSF55068">
    <property type="entry name" value="Peptide methionine sulfoxide reductase"/>
    <property type="match status" value="1"/>
</dbReference>
<accession>Q1B1N8</accession>
<organism>
    <name type="scientific">Mycobacterium sp. (strain MCS)</name>
    <dbReference type="NCBI Taxonomy" id="164756"/>
    <lineage>
        <taxon>Bacteria</taxon>
        <taxon>Bacillati</taxon>
        <taxon>Actinomycetota</taxon>
        <taxon>Actinomycetes</taxon>
        <taxon>Mycobacteriales</taxon>
        <taxon>Mycobacteriaceae</taxon>
        <taxon>Mycobacterium</taxon>
    </lineage>
</organism>
<protein>
    <recommendedName>
        <fullName evidence="1">Peptide methionine sulfoxide reductase MsrA</fullName>
        <shortName evidence="1">Protein-methionine-S-oxide reductase</shortName>
        <ecNumber evidence="1">1.8.4.11</ecNumber>
    </recommendedName>
    <alternativeName>
        <fullName evidence="1">Peptide-methionine (S)-S-oxide reductase</fullName>
        <shortName evidence="1">Peptide Met(O) reductase</shortName>
    </alternativeName>
</protein>
<feature type="chain" id="PRO_1000145421" description="Peptide methionine sulfoxide reductase MsrA">
    <location>
        <begin position="1"/>
        <end position="171"/>
    </location>
</feature>
<feature type="active site" evidence="1">
    <location>
        <position position="13"/>
    </location>
</feature>
<gene>
    <name evidence="1" type="primary">msrA</name>
    <name type="ordered locus">Mmcs_5092</name>
</gene>
<comment type="function">
    <text evidence="1">Has an important function as a repair enzyme for proteins that have been inactivated by oxidation. Catalyzes the reversible oxidation-reduction of methionine sulfoxide in proteins to methionine.</text>
</comment>
<comment type="catalytic activity">
    <reaction evidence="1">
        <text>L-methionyl-[protein] + [thioredoxin]-disulfide + H2O = L-methionyl-(S)-S-oxide-[protein] + [thioredoxin]-dithiol</text>
        <dbReference type="Rhea" id="RHEA:14217"/>
        <dbReference type="Rhea" id="RHEA-COMP:10698"/>
        <dbReference type="Rhea" id="RHEA-COMP:10700"/>
        <dbReference type="Rhea" id="RHEA-COMP:12313"/>
        <dbReference type="Rhea" id="RHEA-COMP:12315"/>
        <dbReference type="ChEBI" id="CHEBI:15377"/>
        <dbReference type="ChEBI" id="CHEBI:16044"/>
        <dbReference type="ChEBI" id="CHEBI:29950"/>
        <dbReference type="ChEBI" id="CHEBI:44120"/>
        <dbReference type="ChEBI" id="CHEBI:50058"/>
        <dbReference type="EC" id="1.8.4.11"/>
    </reaction>
</comment>
<comment type="catalytic activity">
    <reaction evidence="1">
        <text>[thioredoxin]-disulfide + L-methionine + H2O = L-methionine (S)-S-oxide + [thioredoxin]-dithiol</text>
        <dbReference type="Rhea" id="RHEA:19993"/>
        <dbReference type="Rhea" id="RHEA-COMP:10698"/>
        <dbReference type="Rhea" id="RHEA-COMP:10700"/>
        <dbReference type="ChEBI" id="CHEBI:15377"/>
        <dbReference type="ChEBI" id="CHEBI:29950"/>
        <dbReference type="ChEBI" id="CHEBI:50058"/>
        <dbReference type="ChEBI" id="CHEBI:57844"/>
        <dbReference type="ChEBI" id="CHEBI:58772"/>
        <dbReference type="EC" id="1.8.4.11"/>
    </reaction>
</comment>
<comment type="similarity">
    <text evidence="1">Belongs to the MsrA Met sulfoxide reductase family.</text>
</comment>